<sequence>MKTTAEIRQSFLDFFHSKGHQVVESSSLVPENDPTLLFTNAGMNQFKDVFLGMDKRPYSRATTAQRCVRAGGKHNDLENVGYTARHHTFFEMMGNFSFGDYFKYDAINFAWEFLTSPKWLALPKEKLYVTVYETDDEAYDIWNKEVGVPQEHIIRIGDNKGAPYASDNFWAMGDTGPCGPCTEIFYDHGDHIWGGLPGTPEEDGDRYIEIWNIVFMQFNRLADGTMEKLPKPSVDTGMGLERMTAVLQHVNSNYEIDIFQTLIKKVAEIVGTTDLGNKSLRVIADHIRSCAYLIADGVIPSNEGRGYVLRRIIRRAVRHGHLLGAKETFFYKLVPTLIEVMAEAGKQVKEKQANVEKLLRLEEEQFARTLERGLILLDAELANVKNGVLSGEVAFKLYDTYGFPLDLTADVCRERNIAVDENGFDKEMEAQRLRAQSASNFGMDYTSIIRVDGETKFEGYTNVESLAKVTALFRDGKAVESVSAGQSAVVILENTPFYAEMGGQIGDSGMLTANGLHFDVKDTQKYGQVFGHIGELTQGTLSVGQIVNAQVDAQRRQYTKLNHSATHLLHAALRQVLGEHVAQKGSLVSDVGLRFDFVQPEAVTKEQIMEIERLVNFHIRANHPVLTEEMGVAEAKSKGAIALFGEKYGETVRVVTMSPFSIELCGGLHVERTGEIGLLKIISEGAVAAGIRRVEAVTGEEAINWLFNQQTILAQSADLLKSDIPSLPEKIIQLQDKVKKTEKELQQLKEKAAMQAGSDLAKSAVKINGVSVVTHQLDGADAKVLRVMVDDLKNQLGSAVIALGSASGGKVNLIAGVTADLTAKVKAGELVNVMAQQVGGKGGGRPDMAMAGGSQPENLSAALIVASDWLKTMI</sequence>
<protein>
    <recommendedName>
        <fullName evidence="1">Alanine--tRNA ligase</fullName>
        <ecNumber evidence="1">6.1.1.7</ecNumber>
    </recommendedName>
    <alternativeName>
        <fullName evidence="1">Alanyl-tRNA synthetase</fullName>
        <shortName evidence="1">AlaRS</shortName>
    </alternativeName>
</protein>
<accession>A6VKD6</accession>
<dbReference type="EC" id="6.1.1.7" evidence="1"/>
<dbReference type="EMBL" id="CP000746">
    <property type="protein sequence ID" value="ABR73433.1"/>
    <property type="molecule type" value="Genomic_DNA"/>
</dbReference>
<dbReference type="RefSeq" id="WP_011978709.1">
    <property type="nucleotide sequence ID" value="NC_009655.1"/>
</dbReference>
<dbReference type="SMR" id="A6VKD6"/>
<dbReference type="STRING" id="339671.Asuc_0052"/>
<dbReference type="KEGG" id="asu:Asuc_0052"/>
<dbReference type="eggNOG" id="COG0013">
    <property type="taxonomic scope" value="Bacteria"/>
</dbReference>
<dbReference type="HOGENOM" id="CLU_004485_1_1_6"/>
<dbReference type="OrthoDB" id="9803884at2"/>
<dbReference type="Proteomes" id="UP000001114">
    <property type="component" value="Chromosome"/>
</dbReference>
<dbReference type="GO" id="GO:0005829">
    <property type="term" value="C:cytosol"/>
    <property type="evidence" value="ECO:0007669"/>
    <property type="project" value="TreeGrafter"/>
</dbReference>
<dbReference type="GO" id="GO:0004813">
    <property type="term" value="F:alanine-tRNA ligase activity"/>
    <property type="evidence" value="ECO:0007669"/>
    <property type="project" value="UniProtKB-UniRule"/>
</dbReference>
<dbReference type="GO" id="GO:0002161">
    <property type="term" value="F:aminoacyl-tRNA deacylase activity"/>
    <property type="evidence" value="ECO:0007669"/>
    <property type="project" value="TreeGrafter"/>
</dbReference>
<dbReference type="GO" id="GO:0005524">
    <property type="term" value="F:ATP binding"/>
    <property type="evidence" value="ECO:0007669"/>
    <property type="project" value="UniProtKB-UniRule"/>
</dbReference>
<dbReference type="GO" id="GO:0000049">
    <property type="term" value="F:tRNA binding"/>
    <property type="evidence" value="ECO:0007669"/>
    <property type="project" value="UniProtKB-KW"/>
</dbReference>
<dbReference type="GO" id="GO:0008270">
    <property type="term" value="F:zinc ion binding"/>
    <property type="evidence" value="ECO:0007669"/>
    <property type="project" value="UniProtKB-UniRule"/>
</dbReference>
<dbReference type="GO" id="GO:0006419">
    <property type="term" value="P:alanyl-tRNA aminoacylation"/>
    <property type="evidence" value="ECO:0007669"/>
    <property type="project" value="UniProtKB-UniRule"/>
</dbReference>
<dbReference type="GO" id="GO:0045892">
    <property type="term" value="P:negative regulation of DNA-templated transcription"/>
    <property type="evidence" value="ECO:0007669"/>
    <property type="project" value="TreeGrafter"/>
</dbReference>
<dbReference type="CDD" id="cd00673">
    <property type="entry name" value="AlaRS_core"/>
    <property type="match status" value="1"/>
</dbReference>
<dbReference type="FunFam" id="2.40.30.130:FF:000001">
    <property type="entry name" value="Alanine--tRNA ligase"/>
    <property type="match status" value="1"/>
</dbReference>
<dbReference type="FunFam" id="3.10.310.40:FF:000001">
    <property type="entry name" value="Alanine--tRNA ligase"/>
    <property type="match status" value="1"/>
</dbReference>
<dbReference type="FunFam" id="3.30.54.20:FF:000001">
    <property type="entry name" value="Alanine--tRNA ligase"/>
    <property type="match status" value="1"/>
</dbReference>
<dbReference type="FunFam" id="3.30.930.10:FF:000004">
    <property type="entry name" value="Alanine--tRNA ligase"/>
    <property type="match status" value="1"/>
</dbReference>
<dbReference type="FunFam" id="3.30.980.10:FF:000004">
    <property type="entry name" value="Alanine--tRNA ligase, cytoplasmic"/>
    <property type="match status" value="1"/>
</dbReference>
<dbReference type="Gene3D" id="2.40.30.130">
    <property type="match status" value="1"/>
</dbReference>
<dbReference type="Gene3D" id="3.10.310.40">
    <property type="match status" value="1"/>
</dbReference>
<dbReference type="Gene3D" id="3.30.54.20">
    <property type="match status" value="1"/>
</dbReference>
<dbReference type="Gene3D" id="6.10.250.550">
    <property type="match status" value="1"/>
</dbReference>
<dbReference type="Gene3D" id="3.30.930.10">
    <property type="entry name" value="Bira Bifunctional Protein, Domain 2"/>
    <property type="match status" value="1"/>
</dbReference>
<dbReference type="Gene3D" id="3.30.980.10">
    <property type="entry name" value="Threonyl-trna Synthetase, Chain A, domain 2"/>
    <property type="match status" value="1"/>
</dbReference>
<dbReference type="HAMAP" id="MF_00036_B">
    <property type="entry name" value="Ala_tRNA_synth_B"/>
    <property type="match status" value="1"/>
</dbReference>
<dbReference type="InterPro" id="IPR045864">
    <property type="entry name" value="aa-tRNA-synth_II/BPL/LPL"/>
</dbReference>
<dbReference type="InterPro" id="IPR002318">
    <property type="entry name" value="Ala-tRNA-lgiase_IIc"/>
</dbReference>
<dbReference type="InterPro" id="IPR018162">
    <property type="entry name" value="Ala-tRNA-ligase_IIc_anticod-bd"/>
</dbReference>
<dbReference type="InterPro" id="IPR018165">
    <property type="entry name" value="Ala-tRNA-synth_IIc_core"/>
</dbReference>
<dbReference type="InterPro" id="IPR018164">
    <property type="entry name" value="Ala-tRNA-synth_IIc_N"/>
</dbReference>
<dbReference type="InterPro" id="IPR050058">
    <property type="entry name" value="Ala-tRNA_ligase"/>
</dbReference>
<dbReference type="InterPro" id="IPR023033">
    <property type="entry name" value="Ala_tRNA_ligase_euk/bac"/>
</dbReference>
<dbReference type="InterPro" id="IPR003156">
    <property type="entry name" value="DHHA1_dom"/>
</dbReference>
<dbReference type="InterPro" id="IPR018163">
    <property type="entry name" value="Thr/Ala-tRNA-synth_IIc_edit"/>
</dbReference>
<dbReference type="InterPro" id="IPR009000">
    <property type="entry name" value="Transl_B-barrel_sf"/>
</dbReference>
<dbReference type="InterPro" id="IPR012947">
    <property type="entry name" value="tRNA_SAD"/>
</dbReference>
<dbReference type="NCBIfam" id="TIGR00344">
    <property type="entry name" value="alaS"/>
    <property type="match status" value="1"/>
</dbReference>
<dbReference type="PANTHER" id="PTHR11777:SF9">
    <property type="entry name" value="ALANINE--TRNA LIGASE, CYTOPLASMIC"/>
    <property type="match status" value="1"/>
</dbReference>
<dbReference type="PANTHER" id="PTHR11777">
    <property type="entry name" value="ALANYL-TRNA SYNTHETASE"/>
    <property type="match status" value="1"/>
</dbReference>
<dbReference type="Pfam" id="PF02272">
    <property type="entry name" value="DHHA1"/>
    <property type="match status" value="1"/>
</dbReference>
<dbReference type="Pfam" id="PF01411">
    <property type="entry name" value="tRNA-synt_2c"/>
    <property type="match status" value="1"/>
</dbReference>
<dbReference type="Pfam" id="PF07973">
    <property type="entry name" value="tRNA_SAD"/>
    <property type="match status" value="1"/>
</dbReference>
<dbReference type="PRINTS" id="PR00980">
    <property type="entry name" value="TRNASYNTHALA"/>
</dbReference>
<dbReference type="SMART" id="SM00863">
    <property type="entry name" value="tRNA_SAD"/>
    <property type="match status" value="1"/>
</dbReference>
<dbReference type="SUPFAM" id="SSF55681">
    <property type="entry name" value="Class II aaRS and biotin synthetases"/>
    <property type="match status" value="1"/>
</dbReference>
<dbReference type="SUPFAM" id="SSF101353">
    <property type="entry name" value="Putative anticodon-binding domain of alanyl-tRNA synthetase (AlaRS)"/>
    <property type="match status" value="1"/>
</dbReference>
<dbReference type="SUPFAM" id="SSF55186">
    <property type="entry name" value="ThrRS/AlaRS common domain"/>
    <property type="match status" value="1"/>
</dbReference>
<dbReference type="SUPFAM" id="SSF50447">
    <property type="entry name" value="Translation proteins"/>
    <property type="match status" value="1"/>
</dbReference>
<dbReference type="PROSITE" id="PS50860">
    <property type="entry name" value="AA_TRNA_LIGASE_II_ALA"/>
    <property type="match status" value="1"/>
</dbReference>
<reference key="1">
    <citation type="journal article" date="2010" name="BMC Genomics">
        <title>A genomic perspective on the potential of Actinobacillus succinogenes for industrial succinate production.</title>
        <authorList>
            <person name="McKinlay J.B."/>
            <person name="Laivenieks M."/>
            <person name="Schindler B.D."/>
            <person name="McKinlay A.A."/>
            <person name="Siddaramappa S."/>
            <person name="Challacombe J.F."/>
            <person name="Lowry S.R."/>
            <person name="Clum A."/>
            <person name="Lapidus A.L."/>
            <person name="Burkhart K.B."/>
            <person name="Harkins V."/>
            <person name="Vieille C."/>
        </authorList>
    </citation>
    <scope>NUCLEOTIDE SEQUENCE [LARGE SCALE GENOMIC DNA]</scope>
    <source>
        <strain>ATCC 55618 / DSM 22257 / CCUG 43843 / 130Z</strain>
    </source>
</reference>
<organism>
    <name type="scientific">Actinobacillus succinogenes (strain ATCC 55618 / DSM 22257 / CCUG 43843 / 130Z)</name>
    <dbReference type="NCBI Taxonomy" id="339671"/>
    <lineage>
        <taxon>Bacteria</taxon>
        <taxon>Pseudomonadati</taxon>
        <taxon>Pseudomonadota</taxon>
        <taxon>Gammaproteobacteria</taxon>
        <taxon>Pasteurellales</taxon>
        <taxon>Pasteurellaceae</taxon>
        <taxon>Actinobacillus</taxon>
    </lineage>
</organism>
<comment type="function">
    <text evidence="1">Catalyzes the attachment of alanine to tRNA(Ala) in a two-step reaction: alanine is first activated by ATP to form Ala-AMP and then transferred to the acceptor end of tRNA(Ala). Also edits incorrectly charged Ser-tRNA(Ala) and Gly-tRNA(Ala) via its editing domain.</text>
</comment>
<comment type="catalytic activity">
    <reaction evidence="1">
        <text>tRNA(Ala) + L-alanine + ATP = L-alanyl-tRNA(Ala) + AMP + diphosphate</text>
        <dbReference type="Rhea" id="RHEA:12540"/>
        <dbReference type="Rhea" id="RHEA-COMP:9657"/>
        <dbReference type="Rhea" id="RHEA-COMP:9923"/>
        <dbReference type="ChEBI" id="CHEBI:30616"/>
        <dbReference type="ChEBI" id="CHEBI:33019"/>
        <dbReference type="ChEBI" id="CHEBI:57972"/>
        <dbReference type="ChEBI" id="CHEBI:78442"/>
        <dbReference type="ChEBI" id="CHEBI:78497"/>
        <dbReference type="ChEBI" id="CHEBI:456215"/>
        <dbReference type="EC" id="6.1.1.7"/>
    </reaction>
</comment>
<comment type="cofactor">
    <cofactor evidence="1">
        <name>Zn(2+)</name>
        <dbReference type="ChEBI" id="CHEBI:29105"/>
    </cofactor>
    <text evidence="1">Binds 1 zinc ion per subunit.</text>
</comment>
<comment type="subcellular location">
    <subcellularLocation>
        <location evidence="1">Cytoplasm</location>
    </subcellularLocation>
</comment>
<comment type="domain">
    <text evidence="1">Consists of three domains; the N-terminal catalytic domain, the editing domain and the C-terminal C-Ala domain. The editing domain removes incorrectly charged amino acids, while the C-Ala domain, along with tRNA(Ala), serves as a bridge to cooperatively bring together the editing and aminoacylation centers thus stimulating deacylation of misacylated tRNAs.</text>
</comment>
<comment type="similarity">
    <text evidence="1">Belongs to the class-II aminoacyl-tRNA synthetase family.</text>
</comment>
<proteinExistence type="inferred from homology"/>
<name>SYA_ACTSZ</name>
<feature type="chain" id="PRO_0000347479" description="Alanine--tRNA ligase">
    <location>
        <begin position="1"/>
        <end position="874"/>
    </location>
</feature>
<feature type="binding site" evidence="1">
    <location>
        <position position="563"/>
    </location>
    <ligand>
        <name>Zn(2+)</name>
        <dbReference type="ChEBI" id="CHEBI:29105"/>
    </ligand>
</feature>
<feature type="binding site" evidence="1">
    <location>
        <position position="567"/>
    </location>
    <ligand>
        <name>Zn(2+)</name>
        <dbReference type="ChEBI" id="CHEBI:29105"/>
    </ligand>
</feature>
<feature type="binding site" evidence="1">
    <location>
        <position position="665"/>
    </location>
    <ligand>
        <name>Zn(2+)</name>
        <dbReference type="ChEBI" id="CHEBI:29105"/>
    </ligand>
</feature>
<feature type="binding site" evidence="1">
    <location>
        <position position="669"/>
    </location>
    <ligand>
        <name>Zn(2+)</name>
        <dbReference type="ChEBI" id="CHEBI:29105"/>
    </ligand>
</feature>
<keyword id="KW-0030">Aminoacyl-tRNA synthetase</keyword>
<keyword id="KW-0067">ATP-binding</keyword>
<keyword id="KW-0963">Cytoplasm</keyword>
<keyword id="KW-0436">Ligase</keyword>
<keyword id="KW-0479">Metal-binding</keyword>
<keyword id="KW-0547">Nucleotide-binding</keyword>
<keyword id="KW-0648">Protein biosynthesis</keyword>
<keyword id="KW-1185">Reference proteome</keyword>
<keyword id="KW-0694">RNA-binding</keyword>
<keyword id="KW-0820">tRNA-binding</keyword>
<keyword id="KW-0862">Zinc</keyword>
<evidence type="ECO:0000255" key="1">
    <source>
        <dbReference type="HAMAP-Rule" id="MF_00036"/>
    </source>
</evidence>
<gene>
    <name evidence="1" type="primary">alaS</name>
    <name type="ordered locus">Asuc_0052</name>
</gene>